<gene>
    <name evidence="1" type="primary">def</name>
    <name type="ordered locus">CF0692</name>
</gene>
<accession>Q253S4</accession>
<protein>
    <recommendedName>
        <fullName evidence="1">Peptide deformylase</fullName>
        <shortName evidence="1">PDF</shortName>
        <ecNumber evidence="1">3.5.1.88</ecNumber>
    </recommendedName>
    <alternativeName>
        <fullName evidence="1">Polypeptide deformylase</fullName>
    </alternativeName>
</protein>
<reference key="1">
    <citation type="journal article" date="2006" name="DNA Res.">
        <title>Genome sequence of the cat pathogen, Chlamydophila felis.</title>
        <authorList>
            <person name="Azuma Y."/>
            <person name="Hirakawa H."/>
            <person name="Yamashita A."/>
            <person name="Cai Y."/>
            <person name="Rahman M.A."/>
            <person name="Suzuki H."/>
            <person name="Mitaku S."/>
            <person name="Toh H."/>
            <person name="Goto S."/>
            <person name="Murakami T."/>
            <person name="Sugi K."/>
            <person name="Hayashi H."/>
            <person name="Fukushi H."/>
            <person name="Hattori M."/>
            <person name="Kuhara S."/>
            <person name="Shirai M."/>
        </authorList>
    </citation>
    <scope>NUCLEOTIDE SEQUENCE [LARGE SCALE GENOMIC DNA]</scope>
    <source>
        <strain>Fe/C-56</strain>
    </source>
</reference>
<dbReference type="EC" id="3.5.1.88" evidence="1"/>
<dbReference type="EMBL" id="AP006861">
    <property type="protein sequence ID" value="BAE81464.1"/>
    <property type="molecule type" value="Genomic_DNA"/>
</dbReference>
<dbReference type="RefSeq" id="WP_011458242.1">
    <property type="nucleotide sequence ID" value="NC_007899.1"/>
</dbReference>
<dbReference type="SMR" id="Q253S4"/>
<dbReference type="STRING" id="264202.CF0692"/>
<dbReference type="KEGG" id="cfe:CF0692"/>
<dbReference type="eggNOG" id="COG0242">
    <property type="taxonomic scope" value="Bacteria"/>
</dbReference>
<dbReference type="HOGENOM" id="CLU_061901_2_0_0"/>
<dbReference type="OrthoDB" id="9784988at2"/>
<dbReference type="Proteomes" id="UP000001260">
    <property type="component" value="Chromosome"/>
</dbReference>
<dbReference type="GO" id="GO:0046872">
    <property type="term" value="F:metal ion binding"/>
    <property type="evidence" value="ECO:0007669"/>
    <property type="project" value="UniProtKB-KW"/>
</dbReference>
<dbReference type="GO" id="GO:0042586">
    <property type="term" value="F:peptide deformylase activity"/>
    <property type="evidence" value="ECO:0007669"/>
    <property type="project" value="UniProtKB-UniRule"/>
</dbReference>
<dbReference type="GO" id="GO:0043686">
    <property type="term" value="P:co-translational protein modification"/>
    <property type="evidence" value="ECO:0007669"/>
    <property type="project" value="TreeGrafter"/>
</dbReference>
<dbReference type="GO" id="GO:0006412">
    <property type="term" value="P:translation"/>
    <property type="evidence" value="ECO:0007669"/>
    <property type="project" value="UniProtKB-UniRule"/>
</dbReference>
<dbReference type="CDD" id="cd00487">
    <property type="entry name" value="Pep_deformylase"/>
    <property type="match status" value="1"/>
</dbReference>
<dbReference type="Gene3D" id="3.90.45.10">
    <property type="entry name" value="Peptide deformylase"/>
    <property type="match status" value="1"/>
</dbReference>
<dbReference type="HAMAP" id="MF_00163">
    <property type="entry name" value="Pep_deformylase"/>
    <property type="match status" value="1"/>
</dbReference>
<dbReference type="InterPro" id="IPR023635">
    <property type="entry name" value="Peptide_deformylase"/>
</dbReference>
<dbReference type="InterPro" id="IPR036821">
    <property type="entry name" value="Peptide_deformylase_sf"/>
</dbReference>
<dbReference type="NCBIfam" id="TIGR00079">
    <property type="entry name" value="pept_deformyl"/>
    <property type="match status" value="1"/>
</dbReference>
<dbReference type="NCBIfam" id="NF001159">
    <property type="entry name" value="PRK00150.1-3"/>
    <property type="match status" value="1"/>
</dbReference>
<dbReference type="PANTHER" id="PTHR10458">
    <property type="entry name" value="PEPTIDE DEFORMYLASE"/>
    <property type="match status" value="1"/>
</dbReference>
<dbReference type="PANTHER" id="PTHR10458:SF22">
    <property type="entry name" value="PEPTIDE DEFORMYLASE"/>
    <property type="match status" value="1"/>
</dbReference>
<dbReference type="Pfam" id="PF01327">
    <property type="entry name" value="Pep_deformylase"/>
    <property type="match status" value="1"/>
</dbReference>
<dbReference type="PIRSF" id="PIRSF004749">
    <property type="entry name" value="Pep_def"/>
    <property type="match status" value="1"/>
</dbReference>
<dbReference type="PRINTS" id="PR01576">
    <property type="entry name" value="PDEFORMYLASE"/>
</dbReference>
<dbReference type="SUPFAM" id="SSF56420">
    <property type="entry name" value="Peptide deformylase"/>
    <property type="match status" value="1"/>
</dbReference>
<evidence type="ECO:0000255" key="1">
    <source>
        <dbReference type="HAMAP-Rule" id="MF_00163"/>
    </source>
</evidence>
<sequence length="186" mass="21133">MIRELEYYGSHILRRKADIIPEITDTIRQLVQDMYETMVAHKGVGLAAPQVGESLSLFVVCVEGETEDGDLIFCDFPKVYINPVLSNASEDLVIGREGCLSIPGLRADVYRPQSITVTALNLDGQEFTEHLEGFPARIIMHENDHLHGVLYIDKMEEPKDIKKFKASLEKIRRRYHAHVKPEDRAS</sequence>
<feature type="chain" id="PRO_0000301018" description="Peptide deformylase">
    <location>
        <begin position="1"/>
        <end position="186"/>
    </location>
</feature>
<feature type="active site" evidence="1">
    <location>
        <position position="142"/>
    </location>
</feature>
<feature type="binding site" evidence="1">
    <location>
        <position position="99"/>
    </location>
    <ligand>
        <name>Fe cation</name>
        <dbReference type="ChEBI" id="CHEBI:24875"/>
    </ligand>
</feature>
<feature type="binding site" evidence="1">
    <location>
        <position position="141"/>
    </location>
    <ligand>
        <name>Fe cation</name>
        <dbReference type="ChEBI" id="CHEBI:24875"/>
    </ligand>
</feature>
<feature type="binding site" evidence="1">
    <location>
        <position position="145"/>
    </location>
    <ligand>
        <name>Fe cation</name>
        <dbReference type="ChEBI" id="CHEBI:24875"/>
    </ligand>
</feature>
<proteinExistence type="inferred from homology"/>
<comment type="function">
    <text evidence="1">Removes the formyl group from the N-terminal Met of newly synthesized proteins. Requires at least a dipeptide for an efficient rate of reaction. N-terminal L-methionine is a prerequisite for activity but the enzyme has broad specificity at other positions.</text>
</comment>
<comment type="catalytic activity">
    <reaction evidence="1">
        <text>N-terminal N-formyl-L-methionyl-[peptide] + H2O = N-terminal L-methionyl-[peptide] + formate</text>
        <dbReference type="Rhea" id="RHEA:24420"/>
        <dbReference type="Rhea" id="RHEA-COMP:10639"/>
        <dbReference type="Rhea" id="RHEA-COMP:10640"/>
        <dbReference type="ChEBI" id="CHEBI:15377"/>
        <dbReference type="ChEBI" id="CHEBI:15740"/>
        <dbReference type="ChEBI" id="CHEBI:49298"/>
        <dbReference type="ChEBI" id="CHEBI:64731"/>
        <dbReference type="EC" id="3.5.1.88"/>
    </reaction>
</comment>
<comment type="cofactor">
    <cofactor evidence="1">
        <name>Fe(2+)</name>
        <dbReference type="ChEBI" id="CHEBI:29033"/>
    </cofactor>
    <text evidence="1">Binds 1 Fe(2+) ion.</text>
</comment>
<comment type="similarity">
    <text evidence="1">Belongs to the polypeptide deformylase family.</text>
</comment>
<name>DEF_CHLFF</name>
<organism>
    <name type="scientific">Chlamydia felis (strain Fe/C-56)</name>
    <name type="common">Chlamydophila felis</name>
    <dbReference type="NCBI Taxonomy" id="264202"/>
    <lineage>
        <taxon>Bacteria</taxon>
        <taxon>Pseudomonadati</taxon>
        <taxon>Chlamydiota</taxon>
        <taxon>Chlamydiia</taxon>
        <taxon>Chlamydiales</taxon>
        <taxon>Chlamydiaceae</taxon>
        <taxon>Chlamydia/Chlamydophila group</taxon>
        <taxon>Chlamydia</taxon>
    </lineage>
</organism>
<keyword id="KW-0378">Hydrolase</keyword>
<keyword id="KW-0408">Iron</keyword>
<keyword id="KW-0479">Metal-binding</keyword>
<keyword id="KW-0648">Protein biosynthesis</keyword>